<keyword id="KW-0030">Aminoacyl-tRNA synthetase</keyword>
<keyword id="KW-0067">ATP-binding</keyword>
<keyword id="KW-0963">Cytoplasm</keyword>
<keyword id="KW-0436">Ligase</keyword>
<keyword id="KW-0547">Nucleotide-binding</keyword>
<keyword id="KW-0648">Protein biosynthesis</keyword>
<accession>B1LUL8</accession>
<sequence>MRLSRYFMPTLRETPKEAEIVSHRLMLRAGLVRQEAAGIYAWLPLGLRVLERVCAVIRREQDRSGAVEILMPTVQSAELWRESGRYDAYGKEMLRLKDRHDREMLYGPTAEEMVTEIFRASVRSYKDLPKNLYQISWKFRDEVRPRFGTMRSREFLMKDAYSFDFDQAGARHAYNRMFVAYLRTFAGLGLKAIPMRADTGPIGGDLSHEFIILAKTGESEVFCDKAYLGFDIPPATVDFDDVAALQGIVDAWTSHYAATEEMHEPAAFAEVPEDSRMAARGIEVGHIFYFGTKYSEPMGAKVAGPDGIERPVHMGSYGIGPSRLVAAIIEASHDEAGIIWPDAVAPFDVALINLKVGDSATEAACAQIQSDLEAAGLSVLYDDRDERPGAKFATADLIGLPWQVIVGPKGLAEGKVELKRRAGGERESLATVDLLARIRRV</sequence>
<reference key="1">
    <citation type="submission" date="2008-03" db="EMBL/GenBank/DDBJ databases">
        <title>Complete sequence of chromosome of Methylobacterium radiotolerans JCM 2831.</title>
        <authorList>
            <consortium name="US DOE Joint Genome Institute"/>
            <person name="Copeland A."/>
            <person name="Lucas S."/>
            <person name="Lapidus A."/>
            <person name="Glavina del Rio T."/>
            <person name="Dalin E."/>
            <person name="Tice H."/>
            <person name="Bruce D."/>
            <person name="Goodwin L."/>
            <person name="Pitluck S."/>
            <person name="Kiss H."/>
            <person name="Brettin T."/>
            <person name="Detter J.C."/>
            <person name="Han C."/>
            <person name="Kuske C.R."/>
            <person name="Schmutz J."/>
            <person name="Larimer F."/>
            <person name="Land M."/>
            <person name="Hauser L."/>
            <person name="Kyrpides N."/>
            <person name="Mikhailova N."/>
            <person name="Marx C.J."/>
            <person name="Richardson P."/>
        </authorList>
    </citation>
    <scope>NUCLEOTIDE SEQUENCE [LARGE SCALE GENOMIC DNA]</scope>
    <source>
        <strain>ATCC 27329 / DSM 1819 / JCM 2831 / NBRC 15690 / NCIMB 10815 / 0-1</strain>
    </source>
</reference>
<gene>
    <name evidence="1" type="primary">proS</name>
    <name type="ordered locus">Mrad2831_2041</name>
</gene>
<name>SYP_METRJ</name>
<comment type="function">
    <text evidence="1">Catalyzes the attachment of proline to tRNA(Pro) in a two-step reaction: proline is first activated by ATP to form Pro-AMP and then transferred to the acceptor end of tRNA(Pro).</text>
</comment>
<comment type="catalytic activity">
    <reaction evidence="1">
        <text>tRNA(Pro) + L-proline + ATP = L-prolyl-tRNA(Pro) + AMP + diphosphate</text>
        <dbReference type="Rhea" id="RHEA:14305"/>
        <dbReference type="Rhea" id="RHEA-COMP:9700"/>
        <dbReference type="Rhea" id="RHEA-COMP:9702"/>
        <dbReference type="ChEBI" id="CHEBI:30616"/>
        <dbReference type="ChEBI" id="CHEBI:33019"/>
        <dbReference type="ChEBI" id="CHEBI:60039"/>
        <dbReference type="ChEBI" id="CHEBI:78442"/>
        <dbReference type="ChEBI" id="CHEBI:78532"/>
        <dbReference type="ChEBI" id="CHEBI:456215"/>
        <dbReference type="EC" id="6.1.1.15"/>
    </reaction>
</comment>
<comment type="subunit">
    <text evidence="1">Homodimer.</text>
</comment>
<comment type="subcellular location">
    <subcellularLocation>
        <location evidence="1">Cytoplasm</location>
    </subcellularLocation>
</comment>
<comment type="similarity">
    <text evidence="1">Belongs to the class-II aminoacyl-tRNA synthetase family. ProS type 2 subfamily.</text>
</comment>
<protein>
    <recommendedName>
        <fullName evidence="1">Proline--tRNA ligase</fullName>
        <ecNumber evidence="1">6.1.1.15</ecNumber>
    </recommendedName>
    <alternativeName>
        <fullName evidence="1">Prolyl-tRNA synthetase</fullName>
        <shortName evidence="1">ProRS</shortName>
    </alternativeName>
</protein>
<organism>
    <name type="scientific">Methylobacterium radiotolerans (strain ATCC 27329 / DSM 1819 / JCM 2831 / NBRC 15690 / NCIMB 10815 / 0-1)</name>
    <dbReference type="NCBI Taxonomy" id="426355"/>
    <lineage>
        <taxon>Bacteria</taxon>
        <taxon>Pseudomonadati</taxon>
        <taxon>Pseudomonadota</taxon>
        <taxon>Alphaproteobacteria</taxon>
        <taxon>Hyphomicrobiales</taxon>
        <taxon>Methylobacteriaceae</taxon>
        <taxon>Methylobacterium</taxon>
    </lineage>
</organism>
<evidence type="ECO:0000255" key="1">
    <source>
        <dbReference type="HAMAP-Rule" id="MF_01570"/>
    </source>
</evidence>
<feature type="chain" id="PRO_1000199452" description="Proline--tRNA ligase">
    <location>
        <begin position="1"/>
        <end position="441"/>
    </location>
</feature>
<dbReference type="EC" id="6.1.1.15" evidence="1"/>
<dbReference type="EMBL" id="CP001001">
    <property type="protein sequence ID" value="ACB24036.1"/>
    <property type="molecule type" value="Genomic_DNA"/>
</dbReference>
<dbReference type="RefSeq" id="WP_012319020.1">
    <property type="nucleotide sequence ID" value="NC_010505.1"/>
</dbReference>
<dbReference type="SMR" id="B1LUL8"/>
<dbReference type="STRING" id="426355.Mrad2831_2041"/>
<dbReference type="GeneID" id="6138070"/>
<dbReference type="KEGG" id="mrd:Mrad2831_2041"/>
<dbReference type="eggNOG" id="COG0442">
    <property type="taxonomic scope" value="Bacteria"/>
</dbReference>
<dbReference type="HOGENOM" id="CLU_016739_4_2_5"/>
<dbReference type="OrthoDB" id="9809052at2"/>
<dbReference type="Proteomes" id="UP000006589">
    <property type="component" value="Chromosome"/>
</dbReference>
<dbReference type="GO" id="GO:0005829">
    <property type="term" value="C:cytosol"/>
    <property type="evidence" value="ECO:0007669"/>
    <property type="project" value="TreeGrafter"/>
</dbReference>
<dbReference type="GO" id="GO:0005524">
    <property type="term" value="F:ATP binding"/>
    <property type="evidence" value="ECO:0007669"/>
    <property type="project" value="UniProtKB-UniRule"/>
</dbReference>
<dbReference type="GO" id="GO:0004827">
    <property type="term" value="F:proline-tRNA ligase activity"/>
    <property type="evidence" value="ECO:0007669"/>
    <property type="project" value="UniProtKB-UniRule"/>
</dbReference>
<dbReference type="GO" id="GO:0006433">
    <property type="term" value="P:prolyl-tRNA aminoacylation"/>
    <property type="evidence" value="ECO:0007669"/>
    <property type="project" value="UniProtKB-UniRule"/>
</dbReference>
<dbReference type="CDD" id="cd00861">
    <property type="entry name" value="ProRS_anticodon_short"/>
    <property type="match status" value="1"/>
</dbReference>
<dbReference type="CDD" id="cd00779">
    <property type="entry name" value="ProRS_core_prok"/>
    <property type="match status" value="1"/>
</dbReference>
<dbReference type="FunFam" id="3.30.930.10:FF:000042">
    <property type="entry name" value="probable proline--tRNA ligase, mitochondrial"/>
    <property type="match status" value="1"/>
</dbReference>
<dbReference type="FunFam" id="3.40.50.800:FF:000032">
    <property type="entry name" value="Proline--tRNA ligase"/>
    <property type="match status" value="1"/>
</dbReference>
<dbReference type="Gene3D" id="3.40.50.800">
    <property type="entry name" value="Anticodon-binding domain"/>
    <property type="match status" value="1"/>
</dbReference>
<dbReference type="Gene3D" id="3.30.930.10">
    <property type="entry name" value="Bira Bifunctional Protein, Domain 2"/>
    <property type="match status" value="1"/>
</dbReference>
<dbReference type="HAMAP" id="MF_01570">
    <property type="entry name" value="Pro_tRNA_synth_type2"/>
    <property type="match status" value="1"/>
</dbReference>
<dbReference type="InterPro" id="IPR002314">
    <property type="entry name" value="aa-tRNA-synt_IIb"/>
</dbReference>
<dbReference type="InterPro" id="IPR006195">
    <property type="entry name" value="aa-tRNA-synth_II"/>
</dbReference>
<dbReference type="InterPro" id="IPR045864">
    <property type="entry name" value="aa-tRNA-synth_II/BPL/LPL"/>
</dbReference>
<dbReference type="InterPro" id="IPR004154">
    <property type="entry name" value="Anticodon-bd"/>
</dbReference>
<dbReference type="InterPro" id="IPR036621">
    <property type="entry name" value="Anticodon-bd_dom_sf"/>
</dbReference>
<dbReference type="InterPro" id="IPR002316">
    <property type="entry name" value="Pro-tRNA-ligase_IIa"/>
</dbReference>
<dbReference type="InterPro" id="IPR004500">
    <property type="entry name" value="Pro-tRNA-synth_IIa_bac-type"/>
</dbReference>
<dbReference type="InterPro" id="IPR050062">
    <property type="entry name" value="Pro-tRNA_synthetase"/>
</dbReference>
<dbReference type="InterPro" id="IPR023716">
    <property type="entry name" value="Prolyl-tRNA_ligase_IIa_type2"/>
</dbReference>
<dbReference type="InterPro" id="IPR044140">
    <property type="entry name" value="ProRS_anticodon_short"/>
</dbReference>
<dbReference type="InterPro" id="IPR033730">
    <property type="entry name" value="ProRS_core_prok"/>
</dbReference>
<dbReference type="NCBIfam" id="NF008979">
    <property type="entry name" value="PRK12325.1"/>
    <property type="match status" value="1"/>
</dbReference>
<dbReference type="NCBIfam" id="TIGR00409">
    <property type="entry name" value="proS_fam_II"/>
    <property type="match status" value="1"/>
</dbReference>
<dbReference type="PANTHER" id="PTHR42753">
    <property type="entry name" value="MITOCHONDRIAL RIBOSOME PROTEIN L39/PROLYL-TRNA LIGASE FAMILY MEMBER"/>
    <property type="match status" value="1"/>
</dbReference>
<dbReference type="PANTHER" id="PTHR42753:SF2">
    <property type="entry name" value="PROLINE--TRNA LIGASE"/>
    <property type="match status" value="1"/>
</dbReference>
<dbReference type="Pfam" id="PF03129">
    <property type="entry name" value="HGTP_anticodon"/>
    <property type="match status" value="1"/>
</dbReference>
<dbReference type="Pfam" id="PF00587">
    <property type="entry name" value="tRNA-synt_2b"/>
    <property type="match status" value="1"/>
</dbReference>
<dbReference type="PRINTS" id="PR01046">
    <property type="entry name" value="TRNASYNTHPRO"/>
</dbReference>
<dbReference type="SUPFAM" id="SSF52954">
    <property type="entry name" value="Class II aaRS ABD-related"/>
    <property type="match status" value="1"/>
</dbReference>
<dbReference type="SUPFAM" id="SSF55681">
    <property type="entry name" value="Class II aaRS and biotin synthetases"/>
    <property type="match status" value="1"/>
</dbReference>
<dbReference type="PROSITE" id="PS50862">
    <property type="entry name" value="AA_TRNA_LIGASE_II"/>
    <property type="match status" value="1"/>
</dbReference>
<proteinExistence type="inferred from homology"/>